<evidence type="ECO:0000250" key="1">
    <source>
        <dbReference type="UniProtKB" id="Q9GZQ3"/>
    </source>
</evidence>
<evidence type="ECO:0000255" key="2">
    <source>
        <dbReference type="PROSITE-ProRule" id="PRU00602"/>
    </source>
</evidence>
<evidence type="ECO:0000269" key="3">
    <source>
    </source>
</evidence>
<evidence type="ECO:0000305" key="4"/>
<dbReference type="EMBL" id="AF290194">
    <property type="protein sequence ID" value="AAG09914.1"/>
    <property type="molecule type" value="mRNA"/>
</dbReference>
<dbReference type="RefSeq" id="NP_620808.1">
    <property type="nucleotide sequence ID" value="NM_139108.2"/>
</dbReference>
<dbReference type="SMR" id="Q9ERR2"/>
<dbReference type="FunCoup" id="Q9ERR2">
    <property type="interactions" value="339"/>
</dbReference>
<dbReference type="IntAct" id="Q9ERR2">
    <property type="interactions" value="1"/>
</dbReference>
<dbReference type="STRING" id="10116.ENSRNOP00000005925"/>
<dbReference type="PhosphoSitePlus" id="Q9ERR2"/>
<dbReference type="jPOST" id="Q9ERR2"/>
<dbReference type="PaxDb" id="10116-ENSRNOP00000005925"/>
<dbReference type="GeneID" id="245974"/>
<dbReference type="KEGG" id="rno:245974"/>
<dbReference type="UCSC" id="RGD:621468">
    <property type="organism name" value="rat"/>
</dbReference>
<dbReference type="AGR" id="RGD:621468"/>
<dbReference type="CTD" id="28991"/>
<dbReference type="RGD" id="621468">
    <property type="gene designation" value="Commd5"/>
</dbReference>
<dbReference type="eggNOG" id="ENOG502RCJ6">
    <property type="taxonomic scope" value="Eukaryota"/>
</dbReference>
<dbReference type="InParanoid" id="Q9ERR2"/>
<dbReference type="PhylomeDB" id="Q9ERR2"/>
<dbReference type="Reactome" id="R-RNO-8951664">
    <property type="pathway name" value="Neddylation"/>
</dbReference>
<dbReference type="PRO" id="PR:Q9ERR2"/>
<dbReference type="Proteomes" id="UP000002494">
    <property type="component" value="Unplaced"/>
</dbReference>
<dbReference type="GO" id="GO:0005634">
    <property type="term" value="C:nucleus"/>
    <property type="evidence" value="ECO:0000314"/>
    <property type="project" value="MGI"/>
</dbReference>
<dbReference type="GO" id="GO:0030307">
    <property type="term" value="P:positive regulation of cell growth"/>
    <property type="evidence" value="ECO:0000314"/>
    <property type="project" value="RGD"/>
</dbReference>
<dbReference type="GO" id="GO:0030858">
    <property type="term" value="P:positive regulation of epithelial cell differentiation"/>
    <property type="evidence" value="ECO:0000314"/>
    <property type="project" value="RGD"/>
</dbReference>
<dbReference type="GO" id="GO:0072158">
    <property type="term" value="P:proximal tubule morphogenesis"/>
    <property type="evidence" value="ECO:0000314"/>
    <property type="project" value="UniProtKB"/>
</dbReference>
<dbReference type="CDD" id="cd04753">
    <property type="entry name" value="Commd5_HCaRG"/>
    <property type="match status" value="1"/>
</dbReference>
<dbReference type="InterPro" id="IPR017920">
    <property type="entry name" value="COMM"/>
</dbReference>
<dbReference type="InterPro" id="IPR037357">
    <property type="entry name" value="COMMD5"/>
</dbReference>
<dbReference type="PANTHER" id="PTHR15666">
    <property type="entry name" value="COMM DOMAIN CONTAINING PROTEIN 5"/>
    <property type="match status" value="1"/>
</dbReference>
<dbReference type="PANTHER" id="PTHR15666:SF1">
    <property type="entry name" value="COMM DOMAIN-CONTAINING PROTEIN 5"/>
    <property type="match status" value="1"/>
</dbReference>
<dbReference type="Pfam" id="PF07258">
    <property type="entry name" value="COMM_domain"/>
    <property type="match status" value="1"/>
</dbReference>
<dbReference type="Pfam" id="PF21672">
    <property type="entry name" value="COMM_HN"/>
    <property type="match status" value="1"/>
</dbReference>
<dbReference type="PROSITE" id="PS51269">
    <property type="entry name" value="COMM"/>
    <property type="match status" value="1"/>
</dbReference>
<organism>
    <name type="scientific">Rattus norvegicus</name>
    <name type="common">Rat</name>
    <dbReference type="NCBI Taxonomy" id="10116"/>
    <lineage>
        <taxon>Eukaryota</taxon>
        <taxon>Metazoa</taxon>
        <taxon>Chordata</taxon>
        <taxon>Craniata</taxon>
        <taxon>Vertebrata</taxon>
        <taxon>Euteleostomi</taxon>
        <taxon>Mammalia</taxon>
        <taxon>Eutheria</taxon>
        <taxon>Euarchontoglires</taxon>
        <taxon>Glires</taxon>
        <taxon>Rodentia</taxon>
        <taxon>Myomorpha</taxon>
        <taxon>Muroidea</taxon>
        <taxon>Muridae</taxon>
        <taxon>Murinae</taxon>
        <taxon>Rattus</taxon>
    </lineage>
</organism>
<comment type="function">
    <text evidence="1">Scaffold protein in the commander complex that is essential for endosomal recycling of transmembrane cargos; the commander complex is composed of the CCC subcomplex and the retriever subcomplex (By similarity). May modulate activity of cullin-RING E3 ubiquitin ligase (CRL) complexes (By similarity). Negatively regulates cell proliferation (PubMed:12620924). Negatively regulates cell cycle G2/M phase transition probably by transactivating p21/CDKN1A through the p53/TP53-independent signaling pathway (PubMed:12620924). Involved in kidney proximal tubule morphogenesis (PubMed:24515317). Down-regulates activation of NF-kappa-B (By similarity).</text>
</comment>
<comment type="subunit">
    <text evidence="1">Component of the commander complex consisting of the CCC subcomplex and the retriever subcomplex (By similarity). Component of the CCC (COMMD/CCDC22/CCDC93) subcomplex consisting of COMMD1, COMMD2, COMMD3, COMMD4, COMMD5, COMMD6, COMMD7, COMMD8, COMMD9, COMMD10, CCDC22 and CCDC93; within the complex forms a heterodimer with COMMD10 (By similarity). Interacts (via COMM domain) with COMMD1 (via COMM domain). Interacts with RELA, RELB, NFKB1/p105 (By similarity). Interacts with CCDC22, CCDC93, SCNN1B, CUL2, CUL3, CUL4A, CUL4B, CUL7 (By similarity).</text>
</comment>
<comment type="subcellular location">
    <subcellularLocation>
        <location evidence="3">Nucleus</location>
    </subcellularLocation>
</comment>
<comment type="tissue specificity">
    <text evidence="3">Expressed in the zona fasciculata and medulla of the adrenal gland; expressed in kidney proximal tubules. Basal expression is higher in hypertensive than in normotensive animals.</text>
</comment>
<comment type="similarity">
    <text evidence="4">Belongs to the COMM domain-containing protein 5 family.</text>
</comment>
<sequence length="224" mass="24453">MSALGAAAPYLHHPADSHSGRVSFLGSQPSPEVTAVAQLLKDLDRSTFRKLLKLVVGALHGKDCREAVEQLGASANLSEERLAVLLAGTHTLLQQALRLPPASLKPDAFQEELQELGIPQDLIGDLASLAFGSQRPLLDSVAQQQGSSLPHVSYFRWRVDVAISTSAQSRSLQPSVLMQLKLTDGSAHRFEVPIAKFQELRYSVALVLKEMAELEKKCERKLQD</sequence>
<name>COMD5_RAT</name>
<gene>
    <name type="primary">Commd5</name>
</gene>
<accession>Q9ERR2</accession>
<protein>
    <recommendedName>
        <fullName>COMM domain-containing protein 5</fullName>
    </recommendedName>
    <alternativeName>
        <fullName>Hypertension-related calcium-regulated gene protein</fullName>
        <shortName>HCaRG</shortName>
    </alternativeName>
</protein>
<proteinExistence type="evidence at transcript level"/>
<reference key="1">
    <citation type="journal article" date="2000" name="J. Biol. Chem.">
        <title>HCaRG, a novel calcium-regulated gene coding for a nuclear protein, is potentially involved in the regulation of cell proliferation.</title>
        <authorList>
            <person name="Solban N."/>
            <person name="Jia H.-P."/>
            <person name="Richard S."/>
            <person name="Tremblay S."/>
            <person name="Devlin A.M."/>
            <person name="Peng J."/>
            <person name="Gossard F."/>
            <person name="Guo D.-F."/>
            <person name="Morel G."/>
            <person name="Hamet P."/>
            <person name="Lewanczuk R."/>
            <person name="Tremblay J."/>
        </authorList>
    </citation>
    <scope>NUCLEOTIDE SEQUENCE [MRNA]</scope>
    <scope>SUBCELLULAR LOCATION</scope>
    <scope>TISSUE SPECIFICITY</scope>
    <source>
        <strain>SHR</strain>
        <tissue>Parathyroid</tissue>
    </source>
</reference>
<reference key="2">
    <citation type="journal article" date="2003" name="Am. J. Physiol.">
        <title>HCaRG is a novel regulator of renal epithelial cell growth and differentiation causing G2M arrest.</title>
        <authorList>
            <person name="Devlin A.M."/>
            <person name="Solban N."/>
            <person name="Tremblay S."/>
            <person name="Gutkowska J."/>
            <person name="Schurch W."/>
            <person name="Orlov S.N."/>
            <person name="Lewanczuk R."/>
            <person name="Hamet P."/>
            <person name="Tremblay J."/>
        </authorList>
    </citation>
    <scope>FUNCTION</scope>
</reference>
<reference key="3">
    <citation type="journal article" date="2014" name="J. Nephrol.">
        <title>Hypertension-related, calcium-regulated gene (HCaRG/COMMD5) and kidney diseases: HCaRG accelerates tubular repair.</title>
        <authorList>
            <person name="Matsuda H."/>
            <person name="Hamet P."/>
            <person name="Tremblay J."/>
        </authorList>
    </citation>
    <scope>FUNCTION</scope>
</reference>
<feature type="initiator methionine" description="Removed" evidence="1">
    <location>
        <position position="1"/>
    </location>
</feature>
<feature type="chain" id="PRO_0000077397" description="COMM domain-containing protein 5">
    <location>
        <begin position="2"/>
        <end position="224"/>
    </location>
</feature>
<feature type="domain" description="COMM" evidence="2">
    <location>
        <begin position="151"/>
        <end position="215"/>
    </location>
</feature>
<feature type="modified residue" description="N-acetylserine" evidence="1">
    <location>
        <position position="2"/>
    </location>
</feature>
<keyword id="KW-0007">Acetylation</keyword>
<keyword id="KW-0539">Nucleus</keyword>
<keyword id="KW-1185">Reference proteome</keyword>
<keyword id="KW-0804">Transcription</keyword>
<keyword id="KW-0805">Transcription regulation</keyword>
<keyword id="KW-0833">Ubl conjugation pathway</keyword>